<feature type="chain" id="PRO_0000161126" description="Elongation factor Ts">
    <location>
        <begin position="1"/>
        <end position="219"/>
    </location>
</feature>
<feature type="region of interest" description="Involved in Mg(2+) ion dislocation from EF-Tu" evidence="1">
    <location>
        <begin position="82"/>
        <end position="85"/>
    </location>
</feature>
<gene>
    <name evidence="1" type="primary">tsf</name>
    <name type="ordered locus">gll1829</name>
</gene>
<keyword id="KW-0963">Cytoplasm</keyword>
<keyword id="KW-0251">Elongation factor</keyword>
<keyword id="KW-0648">Protein biosynthesis</keyword>
<keyword id="KW-1185">Reference proteome</keyword>
<proteinExistence type="inferred from homology"/>
<protein>
    <recommendedName>
        <fullName evidence="1">Elongation factor Ts</fullName>
        <shortName evidence="1">EF-Ts</shortName>
    </recommendedName>
</protein>
<reference key="1">
    <citation type="journal article" date="2003" name="DNA Res.">
        <title>Complete genome structure of Gloeobacter violaceus PCC 7421, a cyanobacterium that lacks thylakoids.</title>
        <authorList>
            <person name="Nakamura Y."/>
            <person name="Kaneko T."/>
            <person name="Sato S."/>
            <person name="Mimuro M."/>
            <person name="Miyashita H."/>
            <person name="Tsuchiya T."/>
            <person name="Sasamoto S."/>
            <person name="Watanabe A."/>
            <person name="Kawashima K."/>
            <person name="Kishida Y."/>
            <person name="Kiyokawa C."/>
            <person name="Kohara M."/>
            <person name="Matsumoto M."/>
            <person name="Matsuno A."/>
            <person name="Nakazaki N."/>
            <person name="Shimpo S."/>
            <person name="Takeuchi C."/>
            <person name="Yamada M."/>
            <person name="Tabata S."/>
        </authorList>
    </citation>
    <scope>NUCLEOTIDE SEQUENCE [LARGE SCALE GENOMIC DNA]</scope>
    <source>
        <strain>ATCC 29082 / PCC 7421</strain>
    </source>
</reference>
<evidence type="ECO:0000255" key="1">
    <source>
        <dbReference type="HAMAP-Rule" id="MF_00050"/>
    </source>
</evidence>
<dbReference type="EMBL" id="BA000045">
    <property type="protein sequence ID" value="BAC89770.1"/>
    <property type="molecule type" value="Genomic_DNA"/>
</dbReference>
<dbReference type="RefSeq" id="NP_924775.1">
    <property type="nucleotide sequence ID" value="NC_005125.1"/>
</dbReference>
<dbReference type="RefSeq" id="WP_011141827.1">
    <property type="nucleotide sequence ID" value="NC_005125.1"/>
</dbReference>
<dbReference type="SMR" id="Q7NJK3"/>
<dbReference type="FunCoup" id="Q7NJK3">
    <property type="interactions" value="404"/>
</dbReference>
<dbReference type="STRING" id="251221.gene:10759321"/>
<dbReference type="EnsemblBacteria" id="BAC89770">
    <property type="protein sequence ID" value="BAC89770"/>
    <property type="gene ID" value="BAC89770"/>
</dbReference>
<dbReference type="KEGG" id="gvi:gll1829"/>
<dbReference type="PATRIC" id="fig|251221.4.peg.1860"/>
<dbReference type="eggNOG" id="COG0264">
    <property type="taxonomic scope" value="Bacteria"/>
</dbReference>
<dbReference type="HOGENOM" id="CLU_047155_1_1_3"/>
<dbReference type="InParanoid" id="Q7NJK3"/>
<dbReference type="OrthoDB" id="9808348at2"/>
<dbReference type="PhylomeDB" id="Q7NJK3"/>
<dbReference type="Proteomes" id="UP000000557">
    <property type="component" value="Chromosome"/>
</dbReference>
<dbReference type="GO" id="GO:0005737">
    <property type="term" value="C:cytoplasm"/>
    <property type="evidence" value="ECO:0007669"/>
    <property type="project" value="UniProtKB-SubCell"/>
</dbReference>
<dbReference type="GO" id="GO:0003746">
    <property type="term" value="F:translation elongation factor activity"/>
    <property type="evidence" value="ECO:0007669"/>
    <property type="project" value="UniProtKB-UniRule"/>
</dbReference>
<dbReference type="CDD" id="cd14275">
    <property type="entry name" value="UBA_EF-Ts"/>
    <property type="match status" value="1"/>
</dbReference>
<dbReference type="FunFam" id="1.10.8.10:FF:000001">
    <property type="entry name" value="Elongation factor Ts"/>
    <property type="match status" value="1"/>
</dbReference>
<dbReference type="Gene3D" id="1.10.286.20">
    <property type="match status" value="1"/>
</dbReference>
<dbReference type="Gene3D" id="1.10.8.10">
    <property type="entry name" value="DNA helicase RuvA subunit, C-terminal domain"/>
    <property type="match status" value="1"/>
</dbReference>
<dbReference type="Gene3D" id="3.30.479.20">
    <property type="entry name" value="Elongation factor Ts, dimerisation domain"/>
    <property type="match status" value="1"/>
</dbReference>
<dbReference type="HAMAP" id="MF_00050">
    <property type="entry name" value="EF_Ts"/>
    <property type="match status" value="1"/>
</dbReference>
<dbReference type="InterPro" id="IPR036402">
    <property type="entry name" value="EF-Ts_dimer_sf"/>
</dbReference>
<dbReference type="InterPro" id="IPR001816">
    <property type="entry name" value="Transl_elong_EFTs/EF1B"/>
</dbReference>
<dbReference type="InterPro" id="IPR014039">
    <property type="entry name" value="Transl_elong_EFTs/EF1B_dimer"/>
</dbReference>
<dbReference type="InterPro" id="IPR018101">
    <property type="entry name" value="Transl_elong_Ts_CS"/>
</dbReference>
<dbReference type="InterPro" id="IPR009060">
    <property type="entry name" value="UBA-like_sf"/>
</dbReference>
<dbReference type="NCBIfam" id="TIGR00116">
    <property type="entry name" value="tsf"/>
    <property type="match status" value="1"/>
</dbReference>
<dbReference type="PANTHER" id="PTHR11741">
    <property type="entry name" value="ELONGATION FACTOR TS"/>
    <property type="match status" value="1"/>
</dbReference>
<dbReference type="PANTHER" id="PTHR11741:SF0">
    <property type="entry name" value="ELONGATION FACTOR TS, MITOCHONDRIAL"/>
    <property type="match status" value="1"/>
</dbReference>
<dbReference type="Pfam" id="PF00889">
    <property type="entry name" value="EF_TS"/>
    <property type="match status" value="1"/>
</dbReference>
<dbReference type="SUPFAM" id="SSF54713">
    <property type="entry name" value="Elongation factor Ts (EF-Ts), dimerisation domain"/>
    <property type="match status" value="1"/>
</dbReference>
<dbReference type="SUPFAM" id="SSF46934">
    <property type="entry name" value="UBA-like"/>
    <property type="match status" value="1"/>
</dbReference>
<dbReference type="PROSITE" id="PS01126">
    <property type="entry name" value="EF_TS_1"/>
    <property type="match status" value="1"/>
</dbReference>
<dbReference type="PROSITE" id="PS01127">
    <property type="entry name" value="EF_TS_2"/>
    <property type="match status" value="1"/>
</dbReference>
<name>EFTS_GLOVI</name>
<sequence length="219" mass="24326">MAEITSQMVMQLREKTQVGVLDCKKALAEAEGDLEKAIELLRKKGIMKAGKVKDKVATEGLVGSYIHTGGRIGVLVEVNCQTDFVAKGEEFQQLVRDIAMQIAASPNVEFVSVDDVDQEVKDRELAIEVQREDLLSKPEKIRAQIAQGRVDKLFKERALLEQPFIKDQSISVGELITQKIAKIGENIKVRRFARFVLGEGLEKEEKNFAEEVAAQTGSV</sequence>
<organism>
    <name type="scientific">Gloeobacter violaceus (strain ATCC 29082 / PCC 7421)</name>
    <dbReference type="NCBI Taxonomy" id="251221"/>
    <lineage>
        <taxon>Bacteria</taxon>
        <taxon>Bacillati</taxon>
        <taxon>Cyanobacteriota</taxon>
        <taxon>Cyanophyceae</taxon>
        <taxon>Gloeobacterales</taxon>
        <taxon>Gloeobacteraceae</taxon>
        <taxon>Gloeobacter</taxon>
    </lineage>
</organism>
<accession>Q7NJK3</accession>
<comment type="function">
    <text evidence="1">Associates with the EF-Tu.GDP complex and induces the exchange of GDP to GTP. It remains bound to the aminoacyl-tRNA.EF-Tu.GTP complex up to the GTP hydrolysis stage on the ribosome.</text>
</comment>
<comment type="subcellular location">
    <subcellularLocation>
        <location evidence="1">Cytoplasm</location>
    </subcellularLocation>
</comment>
<comment type="similarity">
    <text evidence="1">Belongs to the EF-Ts family.</text>
</comment>